<comment type="function">
    <text evidence="1">Catalyzes the attachment of serine to tRNA(Ser). Is also able to aminoacylate tRNA(Sec) with serine, to form the misacylated tRNA L-seryl-tRNA(Sec), which will be further converted into selenocysteinyl-tRNA(Sec).</text>
</comment>
<comment type="catalytic activity">
    <reaction evidence="1">
        <text>tRNA(Ser) + L-serine + ATP = L-seryl-tRNA(Ser) + AMP + diphosphate + H(+)</text>
        <dbReference type="Rhea" id="RHEA:12292"/>
        <dbReference type="Rhea" id="RHEA-COMP:9669"/>
        <dbReference type="Rhea" id="RHEA-COMP:9703"/>
        <dbReference type="ChEBI" id="CHEBI:15378"/>
        <dbReference type="ChEBI" id="CHEBI:30616"/>
        <dbReference type="ChEBI" id="CHEBI:33019"/>
        <dbReference type="ChEBI" id="CHEBI:33384"/>
        <dbReference type="ChEBI" id="CHEBI:78442"/>
        <dbReference type="ChEBI" id="CHEBI:78533"/>
        <dbReference type="ChEBI" id="CHEBI:456215"/>
        <dbReference type="EC" id="6.1.1.11"/>
    </reaction>
</comment>
<comment type="catalytic activity">
    <reaction evidence="1">
        <text>tRNA(Sec) + L-serine + ATP = L-seryl-tRNA(Sec) + AMP + diphosphate + H(+)</text>
        <dbReference type="Rhea" id="RHEA:42580"/>
        <dbReference type="Rhea" id="RHEA-COMP:9742"/>
        <dbReference type="Rhea" id="RHEA-COMP:10128"/>
        <dbReference type="ChEBI" id="CHEBI:15378"/>
        <dbReference type="ChEBI" id="CHEBI:30616"/>
        <dbReference type="ChEBI" id="CHEBI:33019"/>
        <dbReference type="ChEBI" id="CHEBI:33384"/>
        <dbReference type="ChEBI" id="CHEBI:78442"/>
        <dbReference type="ChEBI" id="CHEBI:78533"/>
        <dbReference type="ChEBI" id="CHEBI:456215"/>
        <dbReference type="EC" id="6.1.1.11"/>
    </reaction>
</comment>
<comment type="pathway">
    <text evidence="1">Aminoacyl-tRNA biosynthesis; selenocysteinyl-tRNA(Sec) biosynthesis; L-seryl-tRNA(Sec) from L-serine and tRNA(Sec): step 1/1.</text>
</comment>
<comment type="subunit">
    <text evidence="1">Homodimer. The tRNA molecule binds across the dimer.</text>
</comment>
<comment type="subcellular location">
    <subcellularLocation>
        <location evidence="1">Cytoplasm</location>
    </subcellularLocation>
</comment>
<comment type="domain">
    <text evidence="1">Consists of two distinct domains, a catalytic core and a N-terminal extension that is involved in tRNA binding.</text>
</comment>
<comment type="similarity">
    <text evidence="1">Belongs to the class-II aminoacyl-tRNA synthetase family. Type-1 seryl-tRNA synthetase subfamily.</text>
</comment>
<sequence>MLDLRYITENTEDLKKVLELRGFKEIGIIDELKSIIQRKREFQKEADILREERNKASKEVGKIKQSGGDITKISASVKLVGEKIKEIESKLEQEENALLNINLGLPNILDPKVPPGKSEHDNIVQYEVGKIPTFQFVPKTHFEIGEALHWIDFEKGVKLSGARAYTYWKDGARLERALMNFMLDVHTKEHDYTEVWVPSMVNDESMMATGQYPKFKDEFYRIDKDELNLIPTAEVPLTNLYRDEIIPEDQLPISVTAHTSCFRREAGSYGKDTRGLVRVHQFQKVELVKFCKPEDSEEEHKKMLSHAENILKKLELPYRVIILCSGDISANSSITYDIEVWMPGLNRYMEISSVSNFRDFQARRGKIRYKSKDGKNQLVHTINGSGLALGRTYAAILENFQNEDGTLRIPEVLKSYF</sequence>
<protein>
    <recommendedName>
        <fullName evidence="1">Serine--tRNA ligase</fullName>
        <ecNumber evidence="1">6.1.1.11</ecNumber>
    </recommendedName>
    <alternativeName>
        <fullName evidence="1">Seryl-tRNA synthetase</fullName>
        <shortName evidence="1">SerRS</shortName>
    </alternativeName>
    <alternativeName>
        <fullName evidence="1">Seryl-tRNA(Ser/Sec) synthetase</fullName>
    </alternativeName>
</protein>
<name>SYS_LEPIC</name>
<feature type="chain" id="PRO_0000122070" description="Serine--tRNA ligase">
    <location>
        <begin position="1"/>
        <end position="417"/>
    </location>
</feature>
<feature type="binding site" evidence="1">
    <location>
        <begin position="232"/>
        <end position="234"/>
    </location>
    <ligand>
        <name>L-serine</name>
        <dbReference type="ChEBI" id="CHEBI:33384"/>
    </ligand>
</feature>
<feature type="binding site" evidence="1">
    <location>
        <begin position="263"/>
        <end position="265"/>
    </location>
    <ligand>
        <name>ATP</name>
        <dbReference type="ChEBI" id="CHEBI:30616"/>
    </ligand>
</feature>
<feature type="binding site" evidence="1">
    <location>
        <position position="279"/>
    </location>
    <ligand>
        <name>ATP</name>
        <dbReference type="ChEBI" id="CHEBI:30616"/>
    </ligand>
</feature>
<feature type="binding site" evidence="1">
    <location>
        <position position="286"/>
    </location>
    <ligand>
        <name>L-serine</name>
        <dbReference type="ChEBI" id="CHEBI:33384"/>
    </ligand>
</feature>
<feature type="binding site" evidence="1">
    <location>
        <begin position="350"/>
        <end position="353"/>
    </location>
    <ligand>
        <name>ATP</name>
        <dbReference type="ChEBI" id="CHEBI:30616"/>
    </ligand>
</feature>
<feature type="binding site" evidence="1">
    <location>
        <position position="385"/>
    </location>
    <ligand>
        <name>L-serine</name>
        <dbReference type="ChEBI" id="CHEBI:33384"/>
    </ligand>
</feature>
<dbReference type="EC" id="6.1.1.11" evidence="1"/>
<dbReference type="EMBL" id="AE016823">
    <property type="protein sequence ID" value="AAS72018.1"/>
    <property type="molecule type" value="Genomic_DNA"/>
</dbReference>
<dbReference type="RefSeq" id="WP_000886261.1">
    <property type="nucleotide sequence ID" value="NC_005823.1"/>
</dbReference>
<dbReference type="SMR" id="Q72LS1"/>
<dbReference type="GeneID" id="61143340"/>
<dbReference type="KEGG" id="lic:LIC_13480"/>
<dbReference type="HOGENOM" id="CLU_023797_1_1_12"/>
<dbReference type="UniPathway" id="UPA00906">
    <property type="reaction ID" value="UER00895"/>
</dbReference>
<dbReference type="Proteomes" id="UP000007037">
    <property type="component" value="Chromosome I"/>
</dbReference>
<dbReference type="GO" id="GO:0005737">
    <property type="term" value="C:cytoplasm"/>
    <property type="evidence" value="ECO:0007669"/>
    <property type="project" value="UniProtKB-SubCell"/>
</dbReference>
<dbReference type="GO" id="GO:0005524">
    <property type="term" value="F:ATP binding"/>
    <property type="evidence" value="ECO:0007669"/>
    <property type="project" value="UniProtKB-UniRule"/>
</dbReference>
<dbReference type="GO" id="GO:0004828">
    <property type="term" value="F:serine-tRNA ligase activity"/>
    <property type="evidence" value="ECO:0007669"/>
    <property type="project" value="UniProtKB-UniRule"/>
</dbReference>
<dbReference type="GO" id="GO:0016260">
    <property type="term" value="P:selenocysteine biosynthetic process"/>
    <property type="evidence" value="ECO:0007669"/>
    <property type="project" value="UniProtKB-UniRule"/>
</dbReference>
<dbReference type="GO" id="GO:0006434">
    <property type="term" value="P:seryl-tRNA aminoacylation"/>
    <property type="evidence" value="ECO:0007669"/>
    <property type="project" value="UniProtKB-UniRule"/>
</dbReference>
<dbReference type="CDD" id="cd00770">
    <property type="entry name" value="SerRS_core"/>
    <property type="match status" value="1"/>
</dbReference>
<dbReference type="Gene3D" id="3.30.930.10">
    <property type="entry name" value="Bira Bifunctional Protein, Domain 2"/>
    <property type="match status" value="1"/>
</dbReference>
<dbReference type="Gene3D" id="1.10.287.40">
    <property type="entry name" value="Serine-tRNA synthetase, tRNA binding domain"/>
    <property type="match status" value="1"/>
</dbReference>
<dbReference type="HAMAP" id="MF_00176">
    <property type="entry name" value="Ser_tRNA_synth_type1"/>
    <property type="match status" value="1"/>
</dbReference>
<dbReference type="InterPro" id="IPR002314">
    <property type="entry name" value="aa-tRNA-synt_IIb"/>
</dbReference>
<dbReference type="InterPro" id="IPR006195">
    <property type="entry name" value="aa-tRNA-synth_II"/>
</dbReference>
<dbReference type="InterPro" id="IPR045864">
    <property type="entry name" value="aa-tRNA-synth_II/BPL/LPL"/>
</dbReference>
<dbReference type="InterPro" id="IPR002317">
    <property type="entry name" value="Ser-tRNA-ligase_type_1"/>
</dbReference>
<dbReference type="InterPro" id="IPR015866">
    <property type="entry name" value="Ser-tRNA-synth_1_N"/>
</dbReference>
<dbReference type="InterPro" id="IPR042103">
    <property type="entry name" value="SerRS_1_N_sf"/>
</dbReference>
<dbReference type="InterPro" id="IPR033729">
    <property type="entry name" value="SerRS_core"/>
</dbReference>
<dbReference type="InterPro" id="IPR010978">
    <property type="entry name" value="tRNA-bd_arm"/>
</dbReference>
<dbReference type="NCBIfam" id="TIGR00414">
    <property type="entry name" value="serS"/>
    <property type="match status" value="1"/>
</dbReference>
<dbReference type="PANTHER" id="PTHR43697:SF1">
    <property type="entry name" value="SERINE--TRNA LIGASE"/>
    <property type="match status" value="1"/>
</dbReference>
<dbReference type="PANTHER" id="PTHR43697">
    <property type="entry name" value="SERYL-TRNA SYNTHETASE"/>
    <property type="match status" value="1"/>
</dbReference>
<dbReference type="Pfam" id="PF02403">
    <property type="entry name" value="Seryl_tRNA_N"/>
    <property type="match status" value="1"/>
</dbReference>
<dbReference type="Pfam" id="PF00587">
    <property type="entry name" value="tRNA-synt_2b"/>
    <property type="match status" value="1"/>
</dbReference>
<dbReference type="PIRSF" id="PIRSF001529">
    <property type="entry name" value="Ser-tRNA-synth_IIa"/>
    <property type="match status" value="1"/>
</dbReference>
<dbReference type="PRINTS" id="PR00981">
    <property type="entry name" value="TRNASYNTHSER"/>
</dbReference>
<dbReference type="SUPFAM" id="SSF55681">
    <property type="entry name" value="Class II aaRS and biotin synthetases"/>
    <property type="match status" value="1"/>
</dbReference>
<dbReference type="SUPFAM" id="SSF46589">
    <property type="entry name" value="tRNA-binding arm"/>
    <property type="match status" value="1"/>
</dbReference>
<dbReference type="PROSITE" id="PS50862">
    <property type="entry name" value="AA_TRNA_LIGASE_II"/>
    <property type="match status" value="1"/>
</dbReference>
<gene>
    <name evidence="1" type="primary">serS</name>
    <name type="ordered locus">LIC_13480</name>
</gene>
<keyword id="KW-0030">Aminoacyl-tRNA synthetase</keyword>
<keyword id="KW-0067">ATP-binding</keyword>
<keyword id="KW-0963">Cytoplasm</keyword>
<keyword id="KW-0436">Ligase</keyword>
<keyword id="KW-0547">Nucleotide-binding</keyword>
<keyword id="KW-0648">Protein biosynthesis</keyword>
<reference key="1">
    <citation type="journal article" date="2004" name="J. Bacteriol.">
        <title>Comparative genomics of two Leptospira interrogans serovars reveals novel insights into physiology and pathogenesis.</title>
        <authorList>
            <person name="Nascimento A.L.T.O."/>
            <person name="Ko A.I."/>
            <person name="Martins E.A.L."/>
            <person name="Monteiro-Vitorello C.B."/>
            <person name="Ho P.L."/>
            <person name="Haake D.A."/>
            <person name="Verjovski-Almeida S."/>
            <person name="Hartskeerl R.A."/>
            <person name="Marques M.V."/>
            <person name="Oliveira M.C."/>
            <person name="Menck C.F.M."/>
            <person name="Leite L.C.C."/>
            <person name="Carrer H."/>
            <person name="Coutinho L.L."/>
            <person name="Degrave W.M."/>
            <person name="Dellagostin O.A."/>
            <person name="El-Dorry H."/>
            <person name="Ferro E.S."/>
            <person name="Ferro M.I.T."/>
            <person name="Furlan L.R."/>
            <person name="Gamberini M."/>
            <person name="Giglioti E.A."/>
            <person name="Goes-Neto A."/>
            <person name="Goldman G.H."/>
            <person name="Goldman M.H.S."/>
            <person name="Harakava R."/>
            <person name="Jeronimo S.M.B."/>
            <person name="Junqueira-de-Azevedo I.L.M."/>
            <person name="Kimura E.T."/>
            <person name="Kuramae E.E."/>
            <person name="Lemos E.G.M."/>
            <person name="Lemos M.V.F."/>
            <person name="Marino C.L."/>
            <person name="Nunes L.R."/>
            <person name="de Oliveira R.C."/>
            <person name="Pereira G.G."/>
            <person name="Reis M.S."/>
            <person name="Schriefer A."/>
            <person name="Siqueira W.J."/>
            <person name="Sommer P."/>
            <person name="Tsai S.M."/>
            <person name="Simpson A.J.G."/>
            <person name="Ferro J.A."/>
            <person name="Camargo L.E.A."/>
            <person name="Kitajima J.P."/>
            <person name="Setubal J.C."/>
            <person name="Van Sluys M.A."/>
        </authorList>
    </citation>
    <scope>NUCLEOTIDE SEQUENCE [LARGE SCALE GENOMIC DNA]</scope>
    <source>
        <strain>Fiocruz L1-130</strain>
    </source>
</reference>
<evidence type="ECO:0000255" key="1">
    <source>
        <dbReference type="HAMAP-Rule" id="MF_00176"/>
    </source>
</evidence>
<organism>
    <name type="scientific">Leptospira interrogans serogroup Icterohaemorrhagiae serovar copenhageni (strain Fiocruz L1-130)</name>
    <dbReference type="NCBI Taxonomy" id="267671"/>
    <lineage>
        <taxon>Bacteria</taxon>
        <taxon>Pseudomonadati</taxon>
        <taxon>Spirochaetota</taxon>
        <taxon>Spirochaetia</taxon>
        <taxon>Leptospirales</taxon>
        <taxon>Leptospiraceae</taxon>
        <taxon>Leptospira</taxon>
    </lineage>
</organism>
<proteinExistence type="inferred from homology"/>
<accession>Q72LS1</accession>